<reference key="1">
    <citation type="journal article" date="2007" name="PLoS ONE">
        <title>A glimpse of streptococcal toxic shock syndrome from comparative genomics of S. suis 2 Chinese isolates.</title>
        <authorList>
            <person name="Chen C."/>
            <person name="Tang J."/>
            <person name="Dong W."/>
            <person name="Wang C."/>
            <person name="Feng Y."/>
            <person name="Wang J."/>
            <person name="Zheng F."/>
            <person name="Pan X."/>
            <person name="Liu D."/>
            <person name="Li M."/>
            <person name="Song Y."/>
            <person name="Zhu X."/>
            <person name="Sun H."/>
            <person name="Feng T."/>
            <person name="Guo Z."/>
            <person name="Ju A."/>
            <person name="Ge J."/>
            <person name="Dong Y."/>
            <person name="Sun W."/>
            <person name="Jiang Y."/>
            <person name="Wang J."/>
            <person name="Yan J."/>
            <person name="Yang H."/>
            <person name="Wang X."/>
            <person name="Gao G.F."/>
            <person name="Yang R."/>
            <person name="Wang J."/>
            <person name="Yu J."/>
        </authorList>
    </citation>
    <scope>NUCLEOTIDE SEQUENCE [LARGE SCALE GENOMIC DNA]</scope>
    <source>
        <strain>98HAH33</strain>
    </source>
</reference>
<organism>
    <name type="scientific">Streptococcus suis (strain 98HAH33)</name>
    <dbReference type="NCBI Taxonomy" id="391296"/>
    <lineage>
        <taxon>Bacteria</taxon>
        <taxon>Bacillati</taxon>
        <taxon>Bacillota</taxon>
        <taxon>Bacilli</taxon>
        <taxon>Lactobacillales</taxon>
        <taxon>Streptococcaceae</taxon>
        <taxon>Streptococcus</taxon>
    </lineage>
</organism>
<proteinExistence type="inferred from homology"/>
<name>NTDP_STRS2</name>
<protein>
    <recommendedName>
        <fullName evidence="1">Nucleoside triphosphate/diphosphate phosphatase</fullName>
        <ecNumber evidence="1">3.6.1.15</ecNumber>
        <ecNumber evidence="1">3.6.1.6</ecNumber>
    </recommendedName>
</protein>
<dbReference type="EC" id="3.6.1.15" evidence="1"/>
<dbReference type="EC" id="3.6.1.6" evidence="1"/>
<dbReference type="EMBL" id="CP000408">
    <property type="protein sequence ID" value="ABP91590.1"/>
    <property type="molecule type" value="Genomic_DNA"/>
</dbReference>
<dbReference type="SMR" id="A4VZQ1"/>
<dbReference type="KEGG" id="ssv:SSU98_0432"/>
<dbReference type="HOGENOM" id="CLU_109787_1_0_9"/>
<dbReference type="BioCyc" id="SSUI391296:GI2E-482-MONOMER"/>
<dbReference type="GO" id="GO:0000287">
    <property type="term" value="F:magnesium ion binding"/>
    <property type="evidence" value="ECO:0007669"/>
    <property type="project" value="UniProtKB-UniRule"/>
</dbReference>
<dbReference type="GO" id="GO:0017110">
    <property type="term" value="F:nucleoside diphosphate phosphatase activity"/>
    <property type="evidence" value="ECO:0007669"/>
    <property type="project" value="UniProtKB-UniRule"/>
</dbReference>
<dbReference type="GO" id="GO:0017111">
    <property type="term" value="F:ribonucleoside triphosphate phosphatase activity"/>
    <property type="evidence" value="ECO:0007669"/>
    <property type="project" value="UniProtKB-UniRule"/>
</dbReference>
<dbReference type="Gene3D" id="2.40.380.10">
    <property type="entry name" value="FomD-like"/>
    <property type="match status" value="1"/>
</dbReference>
<dbReference type="HAMAP" id="MF_01568">
    <property type="entry name" value="Ntdp"/>
    <property type="match status" value="1"/>
</dbReference>
<dbReference type="InterPro" id="IPR007295">
    <property type="entry name" value="DUF402"/>
</dbReference>
<dbReference type="InterPro" id="IPR035930">
    <property type="entry name" value="FomD-like_sf"/>
</dbReference>
<dbReference type="InterPro" id="IPR050212">
    <property type="entry name" value="Ntdp-like"/>
</dbReference>
<dbReference type="InterPro" id="IPR016882">
    <property type="entry name" value="SA1684"/>
</dbReference>
<dbReference type="NCBIfam" id="NF010183">
    <property type="entry name" value="PRK13662.1"/>
    <property type="match status" value="1"/>
</dbReference>
<dbReference type="PANTHER" id="PTHR39159">
    <property type="match status" value="1"/>
</dbReference>
<dbReference type="PANTHER" id="PTHR39159:SF1">
    <property type="entry name" value="UPF0374 PROTEIN YGAC"/>
    <property type="match status" value="1"/>
</dbReference>
<dbReference type="Pfam" id="PF04167">
    <property type="entry name" value="DUF402"/>
    <property type="match status" value="1"/>
</dbReference>
<dbReference type="PIRSF" id="PIRSF028345">
    <property type="entry name" value="UCP028345"/>
    <property type="match status" value="1"/>
</dbReference>
<dbReference type="SUPFAM" id="SSF159234">
    <property type="entry name" value="FomD-like"/>
    <property type="match status" value="1"/>
</dbReference>
<feature type="chain" id="PRO_1000069111" description="Nucleoside triphosphate/diphosphate phosphatase">
    <location>
        <begin position="1"/>
        <end position="177"/>
    </location>
</feature>
<feature type="active site" description="Proton donor" evidence="1">
    <location>
        <position position="23"/>
    </location>
</feature>
<feature type="binding site" evidence="1">
    <location>
        <position position="87"/>
    </location>
    <ligand>
        <name>Mg(2+)</name>
        <dbReference type="ChEBI" id="CHEBI:18420"/>
        <label>1</label>
    </ligand>
</feature>
<feature type="binding site" evidence="1">
    <location>
        <position position="103"/>
    </location>
    <ligand>
        <name>Mg(2+)</name>
        <dbReference type="ChEBI" id="CHEBI:18420"/>
        <label>1</label>
    </ligand>
</feature>
<feature type="binding site" evidence="1">
    <location>
        <position position="105"/>
    </location>
    <ligand>
        <name>Mg(2+)</name>
        <dbReference type="ChEBI" id="CHEBI:18420"/>
        <label>2</label>
    </ligand>
</feature>
<feature type="binding site" evidence="1">
    <location>
        <position position="107"/>
    </location>
    <ligand>
        <name>Mg(2+)</name>
        <dbReference type="ChEBI" id="CHEBI:18420"/>
        <label>1</label>
    </ligand>
</feature>
<feature type="binding site" evidence="1">
    <location>
        <position position="107"/>
    </location>
    <ligand>
        <name>Mg(2+)</name>
        <dbReference type="ChEBI" id="CHEBI:18420"/>
        <label>2</label>
    </ligand>
</feature>
<feature type="binding site" evidence="1">
    <location>
        <position position="120"/>
    </location>
    <ligand>
        <name>Mg(2+)</name>
        <dbReference type="ChEBI" id="CHEBI:18420"/>
        <label>2</label>
    </ligand>
</feature>
<feature type="binding site" evidence="1">
    <location>
        <position position="123"/>
    </location>
    <ligand>
        <name>Mg(2+)</name>
        <dbReference type="ChEBI" id="CHEBI:18420"/>
        <label>2</label>
    </ligand>
</feature>
<evidence type="ECO:0000255" key="1">
    <source>
        <dbReference type="HAMAP-Rule" id="MF_01568"/>
    </source>
</evidence>
<keyword id="KW-0378">Hydrolase</keyword>
<keyword id="KW-0460">Magnesium</keyword>
<keyword id="KW-0479">Metal-binding</keyword>
<comment type="function">
    <text evidence="1">Has nucleoside phosphatase activity towards nucleoside triphosphates and nucleoside diphosphates.</text>
</comment>
<comment type="catalytic activity">
    <reaction evidence="1">
        <text>a ribonucleoside 5'-triphosphate + H2O = a ribonucleoside 5'-diphosphate + phosphate + H(+)</text>
        <dbReference type="Rhea" id="RHEA:23680"/>
        <dbReference type="ChEBI" id="CHEBI:15377"/>
        <dbReference type="ChEBI" id="CHEBI:15378"/>
        <dbReference type="ChEBI" id="CHEBI:43474"/>
        <dbReference type="ChEBI" id="CHEBI:57930"/>
        <dbReference type="ChEBI" id="CHEBI:61557"/>
        <dbReference type="EC" id="3.6.1.15"/>
    </reaction>
</comment>
<comment type="catalytic activity">
    <reaction evidence="1">
        <text>a ribonucleoside 5'-diphosphate + H2O = a ribonucleoside 5'-phosphate + phosphate + H(+)</text>
        <dbReference type="Rhea" id="RHEA:36799"/>
        <dbReference type="ChEBI" id="CHEBI:15377"/>
        <dbReference type="ChEBI" id="CHEBI:15378"/>
        <dbReference type="ChEBI" id="CHEBI:43474"/>
        <dbReference type="ChEBI" id="CHEBI:57930"/>
        <dbReference type="ChEBI" id="CHEBI:58043"/>
        <dbReference type="EC" id="3.6.1.6"/>
    </reaction>
</comment>
<comment type="cofactor">
    <cofactor evidence="1">
        <name>Mg(2+)</name>
        <dbReference type="ChEBI" id="CHEBI:18420"/>
    </cofactor>
</comment>
<comment type="similarity">
    <text evidence="1">Belongs to the Ntdp family.</text>
</comment>
<sequence>MKLPKEGDFITIQSYKHDGEIHRTWRDTMVLKTTENAIIGVNNHTLVTENDGRRWVTREPAIVYFHKKYWFNIIAMIRENGVSYYCNLASPYVLDNEALKYIDYDLDVKVFADGEKRLLDVDEYERHRKAMKYSDDIDFILKENVKILVDWINNQRGPFSPAYVNIWYKRYLELRSR</sequence>
<gene>
    <name type="ordered locus">SSU98_0432</name>
</gene>
<accession>A4VZQ1</accession>